<comment type="function">
    <text evidence="2 3">Transferase involved in the biosynthesis of the lipopolysaccharide (LPS) (PubMed:15215252, PubMed:27303678). Catalyzes the transfer of a polymerized O-antigen molecule from its polyprenyl diphosphate membrane anchor to a terminal sugar of the lipid A-core oligosaccharide, finalizing the biosynthesis of the lipopolysaccharide (PubMed:15215252). May also be involved in a feedback mechanism to regulate O-unit synthesis, based on the availability of O units on the periplasmic face of the membrane (PubMed:27303678).</text>
</comment>
<comment type="catalytic activity">
    <reaction evidence="2">
        <text>a lipid-linked O antigen + a lipid A-core oligosaccharide = a lipopolysaccharide + a polyisoprenyl diphosphate.</text>
        <dbReference type="EC" id="2.4.99.26"/>
    </reaction>
</comment>
<comment type="pathway">
    <text evidence="7 8">Bacterial outer membrane biogenesis; lipopolysaccharide biosynthesis.</text>
</comment>
<comment type="subcellular location">
    <subcellularLocation>
        <location evidence="7 8">Cell inner membrane</location>
        <topology evidence="1">Multi-pass membrane protein</topology>
    </subcellularLocation>
</comment>
<comment type="disruption phenotype">
    <text evidence="3">Loss of the gene reverses a known growth defect in a Salmonella mutant that otherwise accumulates O-unit intermediates.</text>
</comment>
<comment type="similarity">
    <text evidence="6">Belongs to the O-antigen ligase family.</text>
</comment>
<dbReference type="EC" id="2.4.99.26" evidence="2"/>
<dbReference type="EMBL" id="M73826">
    <property type="protein sequence ID" value="AAA27206.1"/>
    <property type="molecule type" value="Genomic_DNA"/>
</dbReference>
<dbReference type="EMBL" id="AE006468">
    <property type="protein sequence ID" value="AAL22572.1"/>
    <property type="molecule type" value="Genomic_DNA"/>
</dbReference>
<dbReference type="PIR" id="B41317">
    <property type="entry name" value="B41317"/>
</dbReference>
<dbReference type="RefSeq" id="NP_462613.1">
    <property type="nucleotide sequence ID" value="NC_003197.2"/>
</dbReference>
<dbReference type="RefSeq" id="WP_000958458.1">
    <property type="nucleotide sequence ID" value="NC_003197.2"/>
</dbReference>
<dbReference type="STRING" id="99287.STM3713"/>
<dbReference type="PaxDb" id="99287-STM3713"/>
<dbReference type="GeneID" id="1255237"/>
<dbReference type="KEGG" id="stm:STM3713"/>
<dbReference type="PATRIC" id="fig|99287.12.peg.3927"/>
<dbReference type="HOGENOM" id="CLU_056701_0_0_6"/>
<dbReference type="BioCyc" id="MetaCyc:STM3713-MONOMER"/>
<dbReference type="BioCyc" id="SENT99287:STM3713-MONOMER"/>
<dbReference type="UniPathway" id="UPA00030"/>
<dbReference type="PHI-base" id="PHI:3726"/>
<dbReference type="PHI-base" id="PHI:6587"/>
<dbReference type="PHI-base" id="PHI:9592"/>
<dbReference type="Proteomes" id="UP000001014">
    <property type="component" value="Chromosome"/>
</dbReference>
<dbReference type="GO" id="GO:0005886">
    <property type="term" value="C:plasma membrane"/>
    <property type="evidence" value="ECO:0007669"/>
    <property type="project" value="UniProtKB-SubCell"/>
</dbReference>
<dbReference type="GO" id="GO:0016757">
    <property type="term" value="F:glycosyltransferase activity"/>
    <property type="evidence" value="ECO:0007669"/>
    <property type="project" value="UniProtKB-KW"/>
</dbReference>
<dbReference type="GO" id="GO:0009244">
    <property type="term" value="P:lipopolysaccharide core region biosynthetic process"/>
    <property type="evidence" value="ECO:0007669"/>
    <property type="project" value="UniProtKB-UniPathway"/>
</dbReference>
<dbReference type="InterPro" id="IPR007016">
    <property type="entry name" value="O-antigen_ligase-rel_domated"/>
</dbReference>
<dbReference type="InterPro" id="IPR051533">
    <property type="entry name" value="WaaL-like"/>
</dbReference>
<dbReference type="NCBIfam" id="NF012031">
    <property type="entry name" value="PRK15487.1"/>
    <property type="match status" value="1"/>
</dbReference>
<dbReference type="PANTHER" id="PTHR37422:SF17">
    <property type="entry name" value="O-ANTIGEN LIGASE"/>
    <property type="match status" value="1"/>
</dbReference>
<dbReference type="PANTHER" id="PTHR37422">
    <property type="entry name" value="TEICHURONIC ACID BIOSYNTHESIS PROTEIN TUAE"/>
    <property type="match status" value="1"/>
</dbReference>
<dbReference type="Pfam" id="PF04932">
    <property type="entry name" value="Wzy_C"/>
    <property type="match status" value="1"/>
</dbReference>
<sequence length="404" mass="46034">MLTTSLTLNKEKWKPIWNKALVFLFVATYFLDGITRYKHLIIILMVITAIYQVSRSPKSFPPLFKNSVFYSVAVLSLILVYSILISPDMKESFKEFENTVLEGFLLYTLLIPVLLKDETKETVAKIVLFSFLTSLGLRCLAESILYIEDYNKGIMPFISYAHRHMSDSMVFLFPALLNIWLFRKNAIKLVFLVLSAIYLFFILGTLSRGAWLAVLIVGVLWAILNRQWKLIGVGAILLAIIGALVITQHNNKPDPEHLLYKLQQTDSSYRYTNGTQGTAWILIQENPIKGYGYGNDVYDGVYNKRVVDYPTWTFKESIGPHNTILYIWFSAGILGLASLVYLYGAIIRETASSTLRKVEISPYNAHLLLFLSFVGFYIVRGNFEQVDIAQIGIITGFLLALRNR</sequence>
<keyword id="KW-0997">Cell inner membrane</keyword>
<keyword id="KW-1003">Cell membrane</keyword>
<keyword id="KW-0328">Glycosyltransferase</keyword>
<keyword id="KW-0448">Lipopolysaccharide biosynthesis</keyword>
<keyword id="KW-0472">Membrane</keyword>
<keyword id="KW-1185">Reference proteome</keyword>
<keyword id="KW-0808">Transferase</keyword>
<keyword id="KW-0812">Transmembrane</keyword>
<keyword id="KW-1133">Transmembrane helix</keyword>
<proteinExistence type="evidence at protein level"/>
<evidence type="ECO:0000255" key="1"/>
<evidence type="ECO:0000269" key="2">
    <source>
    </source>
</evidence>
<evidence type="ECO:0000269" key="3">
    <source>
    </source>
</evidence>
<evidence type="ECO:0000303" key="4">
    <source>
    </source>
</evidence>
<evidence type="ECO:0000303" key="5">
    <source>
    </source>
</evidence>
<evidence type="ECO:0000305" key="6"/>
<evidence type="ECO:0000305" key="7">
    <source>
    </source>
</evidence>
<evidence type="ECO:0000305" key="8">
    <source>
    </source>
</evidence>
<protein>
    <recommendedName>
        <fullName evidence="5">O-antigen ligase</fullName>
        <ecNumber evidence="2">2.4.99.26</ecNumber>
    </recommendedName>
    <alternativeName>
        <fullName evidence="4">WaaL ligase</fullName>
    </alternativeName>
</protein>
<reference key="1">
    <citation type="journal article" date="1991" name="J. Bacteriol.">
        <title>Cloning, characterization, and DNA sequence of the rfaLK region for lipopolysaccharide synthesis in Salmonella typhimurium LT2.</title>
        <authorList>
            <person name="Maclachlan P.R."/>
            <person name="Kadam S.K."/>
            <person name="Sanderson K.E."/>
        </authorList>
    </citation>
    <scope>NUCLEOTIDE SEQUENCE [GENOMIC DNA]</scope>
    <source>
        <strain>LT2</strain>
    </source>
</reference>
<reference key="2">
    <citation type="journal article" date="2001" name="Nature">
        <title>Complete genome sequence of Salmonella enterica serovar Typhimurium LT2.</title>
        <authorList>
            <person name="McClelland M."/>
            <person name="Sanderson K.E."/>
            <person name="Spieth J."/>
            <person name="Clifton S.W."/>
            <person name="Latreille P."/>
            <person name="Courtney L."/>
            <person name="Porwollik S."/>
            <person name="Ali J."/>
            <person name="Dante M."/>
            <person name="Du F."/>
            <person name="Hou S."/>
            <person name="Layman D."/>
            <person name="Leonard S."/>
            <person name="Nguyen C."/>
            <person name="Scott K."/>
            <person name="Holmes A."/>
            <person name="Grewal N."/>
            <person name="Mulvaney E."/>
            <person name="Ryan E."/>
            <person name="Sun H."/>
            <person name="Florea L."/>
            <person name="Miller W."/>
            <person name="Stoneking T."/>
            <person name="Nhan M."/>
            <person name="Waterston R."/>
            <person name="Wilson R.K."/>
        </authorList>
    </citation>
    <scope>NUCLEOTIDE SEQUENCE [LARGE SCALE GENOMIC DNA]</scope>
    <source>
        <strain>LT2 / SGSC1412 / ATCC 700720</strain>
    </source>
</reference>
<reference key="3">
    <citation type="journal article" date="2004" name="J. Biol. Chem.">
        <title>Investigation of the structural requirements in the lipopolysaccharide core acceptor for ligation of O antigens in the genus Salmonella: WaaL 'ligase' is not the sole determinant of acceptor specificity.</title>
        <authorList>
            <person name="Kaniuk N.A."/>
            <person name="Vinogradov E."/>
            <person name="Whitfield C."/>
        </authorList>
    </citation>
    <scope>FUNCTION</scope>
    <scope>CATALYTIC ACTIVITY</scope>
</reference>
<reference key="4">
    <citation type="journal article" date="2016" name="MSphere">
        <title>Model for the Controlled Synthesis of O-Antigen Repeat Units Involving the WaaL Ligase.</title>
        <authorList>
            <person name="Hong Y."/>
            <person name="Reeves P.R."/>
        </authorList>
    </citation>
    <scope>FUNCTION</scope>
    <scope>DISRUPTION PHENOTYPE</scope>
    <source>
        <strain>LT2</strain>
    </source>
</reference>
<organism>
    <name type="scientific">Salmonella typhimurium (strain LT2 / SGSC1412 / ATCC 700720)</name>
    <dbReference type="NCBI Taxonomy" id="99287"/>
    <lineage>
        <taxon>Bacteria</taxon>
        <taxon>Pseudomonadati</taxon>
        <taxon>Pseudomonadota</taxon>
        <taxon>Gammaproteobacteria</taxon>
        <taxon>Enterobacterales</taxon>
        <taxon>Enterobacteriaceae</taxon>
        <taxon>Salmonella</taxon>
    </lineage>
</organism>
<name>WAAL_SALTY</name>
<accession>P26471</accession>
<gene>
    <name evidence="4" type="primary">waaL</name>
    <name evidence="5" type="synonym">rfaL</name>
    <name type="synonym">rfbT</name>
    <name type="ordered locus">STM3713</name>
</gene>
<feature type="chain" id="PRO_0000208067" description="O-antigen ligase">
    <location>
        <begin position="1"/>
        <end position="404"/>
    </location>
</feature>
<feature type="transmembrane region" description="Helical" evidence="1">
    <location>
        <begin position="16"/>
        <end position="32"/>
    </location>
</feature>
<feature type="transmembrane region" description="Helical" evidence="1">
    <location>
        <begin position="39"/>
        <end position="55"/>
    </location>
</feature>
<feature type="transmembrane region" description="Helical" evidence="1">
    <location>
        <begin position="67"/>
        <end position="84"/>
    </location>
</feature>
<feature type="transmembrane region" description="Helical" evidence="1">
    <location>
        <begin position="96"/>
        <end position="115"/>
    </location>
</feature>
<feature type="transmembrane region" description="Helical" evidence="1">
    <location>
        <begin position="127"/>
        <end position="147"/>
    </location>
</feature>
<feature type="transmembrane region" description="Helical" evidence="1">
    <location>
        <begin position="168"/>
        <end position="183"/>
    </location>
</feature>
<feature type="transmembrane region" description="Helical" evidence="1">
    <location>
        <begin position="189"/>
        <end position="221"/>
    </location>
</feature>
<feature type="transmembrane region" description="Helical" evidence="1">
    <location>
        <begin position="228"/>
        <end position="246"/>
    </location>
</feature>
<feature type="transmembrane region" description="Helical" evidence="1">
    <location>
        <begin position="324"/>
        <end position="343"/>
    </location>
</feature>
<feature type="transmembrane region" description="Helical" evidence="1">
    <location>
        <begin position="363"/>
        <end position="379"/>
    </location>
</feature>
<feature type="transmembrane region" description="Helical" evidence="1">
    <location>
        <begin position="385"/>
        <end position="401"/>
    </location>
</feature>